<sequence>MREIVHLQIGQCGNQIGAKFWEVISDEHGIDIAGNYCGNASLQLERINVYFNEAYSHKYVPRSILVDLEPGTMDSVRSSKIGPLFRPDNFIHGNSGAGNNWAKGHYTEGAELIENVMDVVRNECESCDCLQGFQLIHSLGGGTGSGMGTLLINKIREEYPDRIMNTFSVVPSPKVSDTVVEPYNAILSIHQLIENTDETFCIDNEALYDICFRTLKLTNPTYGDLNHLVSLTMSGVTTSLRFPGQLNADLRKLAVNMVPFPRLHFFMPGFAPLTARGSQQYRALSVPELTQQMFDARNMMAACDPRRGRYLTVACIFRGRMSTREVDEQLLSVQTKNSSYFVEWIPNNVKVAVCDIPPRGLKMAATFIGNNTAIQELFIRVSEQFSAMFRRKAFLHWYTGEGMDEMEFSEAEGNTNDLVSEYQQYQDATADVEEYEEAEASPEKET</sequence>
<dbReference type="EMBL" id="J02828">
    <property type="protein sequence ID" value="AAA49120.1"/>
    <property type="molecule type" value="mRNA"/>
</dbReference>
<dbReference type="PIR" id="A27424">
    <property type="entry name" value="A27424"/>
</dbReference>
<dbReference type="RefSeq" id="NP_990776.1">
    <property type="nucleotide sequence ID" value="NM_205445.2"/>
</dbReference>
<dbReference type="PDB" id="3BEW">
    <property type="method" value="X-ray"/>
    <property type="resolution" value="2.60 A"/>
    <property type="chains" value="C/F=324-333"/>
</dbReference>
<dbReference type="PDB" id="9C6R">
    <property type="method" value="EM"/>
    <property type="resolution" value="3.20 A"/>
    <property type="chains" value="B/G/L/Q/V/a/f/k=1-446"/>
</dbReference>
<dbReference type="PDB" id="9C6S">
    <property type="method" value="EM"/>
    <property type="resolution" value="3.52 A"/>
    <property type="chains" value="B/F/J/N/R/V/Z/d/h=1-446"/>
</dbReference>
<dbReference type="PDBsum" id="3BEW"/>
<dbReference type="PDBsum" id="9C6R"/>
<dbReference type="PDBsum" id="9C6S"/>
<dbReference type="EMDB" id="EMD-45263"/>
<dbReference type="EMDB" id="EMD-45265"/>
<dbReference type="SMR" id="P09207"/>
<dbReference type="BioGRID" id="676676">
    <property type="interactions" value="1"/>
</dbReference>
<dbReference type="FunCoup" id="P09207">
    <property type="interactions" value="268"/>
</dbReference>
<dbReference type="STRING" id="9031.ENSGALP00000012034"/>
<dbReference type="PaxDb" id="9031-ENSGALP00000012034"/>
<dbReference type="GeneID" id="396427"/>
<dbReference type="KEGG" id="gga:396427"/>
<dbReference type="CTD" id="81027"/>
<dbReference type="VEuPathDB" id="HostDB:geneid_396427"/>
<dbReference type="eggNOG" id="KOG1375">
    <property type="taxonomic scope" value="Eukaryota"/>
</dbReference>
<dbReference type="HOGENOM" id="CLU_015718_1_1_1"/>
<dbReference type="InParanoid" id="P09207"/>
<dbReference type="OMA" id="NTDACFC"/>
<dbReference type="OrthoDB" id="1662883at2759"/>
<dbReference type="PhylomeDB" id="P09207"/>
<dbReference type="TreeFam" id="TF300298"/>
<dbReference type="Reactome" id="R-GGA-2467813">
    <property type="pathway name" value="Separation of Sister Chromatids"/>
</dbReference>
<dbReference type="Reactome" id="R-GGA-2500257">
    <property type="pathway name" value="Resolution of Sister Chromatid Cohesion"/>
</dbReference>
<dbReference type="Reactome" id="R-GGA-3371497">
    <property type="pathway name" value="HSP90 chaperone cycle for steroid hormone receptors (SHR) in the presence of ligand"/>
</dbReference>
<dbReference type="Reactome" id="R-GGA-5620924">
    <property type="pathway name" value="Intraflagellar transport"/>
</dbReference>
<dbReference type="Reactome" id="R-GGA-6807878">
    <property type="pathway name" value="COPI-mediated anterograde transport"/>
</dbReference>
<dbReference type="Reactome" id="R-GGA-6811434">
    <property type="pathway name" value="COPI-dependent Golgi-to-ER retrograde traffic"/>
</dbReference>
<dbReference type="Reactome" id="R-GGA-6811436">
    <property type="pathway name" value="COPI-independent Golgi-to-ER retrograde traffic"/>
</dbReference>
<dbReference type="Reactome" id="R-GGA-9646399">
    <property type="pathway name" value="Aggrephagy"/>
</dbReference>
<dbReference type="Reactome" id="R-GGA-9648025">
    <property type="pathway name" value="EML4 and NUDC in mitotic spindle formation"/>
</dbReference>
<dbReference type="Reactome" id="R-GGA-983189">
    <property type="pathway name" value="Kinesins"/>
</dbReference>
<dbReference type="EvolutionaryTrace" id="P09207"/>
<dbReference type="PRO" id="PR:P09207"/>
<dbReference type="Proteomes" id="UP000000539">
    <property type="component" value="Chromosome 20"/>
</dbReference>
<dbReference type="Bgee" id="ENSGALG00000007447">
    <property type="expression patterns" value="Expressed in spleen and 13 other cell types or tissues"/>
</dbReference>
<dbReference type="GO" id="GO:0005737">
    <property type="term" value="C:cytoplasm"/>
    <property type="evidence" value="ECO:0000318"/>
    <property type="project" value="GO_Central"/>
</dbReference>
<dbReference type="GO" id="GO:0005874">
    <property type="term" value="C:microtubule"/>
    <property type="evidence" value="ECO:0000318"/>
    <property type="project" value="GO_Central"/>
</dbReference>
<dbReference type="GO" id="GO:0005525">
    <property type="term" value="F:GTP binding"/>
    <property type="evidence" value="ECO:0000318"/>
    <property type="project" value="GO_Central"/>
</dbReference>
<dbReference type="GO" id="GO:0003924">
    <property type="term" value="F:GTPase activity"/>
    <property type="evidence" value="ECO:0007669"/>
    <property type="project" value="InterPro"/>
</dbReference>
<dbReference type="GO" id="GO:0046872">
    <property type="term" value="F:metal ion binding"/>
    <property type="evidence" value="ECO:0007669"/>
    <property type="project" value="UniProtKB-KW"/>
</dbReference>
<dbReference type="GO" id="GO:0005200">
    <property type="term" value="F:structural constituent of cytoskeleton"/>
    <property type="evidence" value="ECO:0000318"/>
    <property type="project" value="GO_Central"/>
</dbReference>
<dbReference type="GO" id="GO:0000226">
    <property type="term" value="P:microtubule cytoskeleton organization"/>
    <property type="evidence" value="ECO:0000318"/>
    <property type="project" value="GO_Central"/>
</dbReference>
<dbReference type="GO" id="GO:0000278">
    <property type="term" value="P:mitotic cell cycle"/>
    <property type="evidence" value="ECO:0000318"/>
    <property type="project" value="GO_Central"/>
</dbReference>
<dbReference type="CDD" id="cd02187">
    <property type="entry name" value="beta_tubulin"/>
    <property type="match status" value="1"/>
</dbReference>
<dbReference type="FunFam" id="1.10.287.600:FF:000002">
    <property type="entry name" value="Tubulin beta chain"/>
    <property type="match status" value="1"/>
</dbReference>
<dbReference type="FunFam" id="3.30.1330.20:FF:000002">
    <property type="entry name" value="Tubulin beta chain"/>
    <property type="match status" value="1"/>
</dbReference>
<dbReference type="FunFam" id="3.40.50.1440:FF:000003">
    <property type="entry name" value="Tubulin beta chain"/>
    <property type="match status" value="1"/>
</dbReference>
<dbReference type="Gene3D" id="1.10.287.600">
    <property type="entry name" value="Helix hairpin bin"/>
    <property type="match status" value="1"/>
</dbReference>
<dbReference type="Gene3D" id="3.30.1330.20">
    <property type="entry name" value="Tubulin/FtsZ, C-terminal domain"/>
    <property type="match status" value="1"/>
</dbReference>
<dbReference type="Gene3D" id="3.40.50.1440">
    <property type="entry name" value="Tubulin/FtsZ, GTPase domain"/>
    <property type="match status" value="1"/>
</dbReference>
<dbReference type="InterPro" id="IPR013838">
    <property type="entry name" value="Beta-tubulin_BS"/>
</dbReference>
<dbReference type="InterPro" id="IPR002453">
    <property type="entry name" value="Beta_tubulin"/>
</dbReference>
<dbReference type="InterPro" id="IPR008280">
    <property type="entry name" value="Tub_FtsZ_C"/>
</dbReference>
<dbReference type="InterPro" id="IPR000217">
    <property type="entry name" value="Tubulin"/>
</dbReference>
<dbReference type="InterPro" id="IPR037103">
    <property type="entry name" value="Tubulin/FtsZ-like_C"/>
</dbReference>
<dbReference type="InterPro" id="IPR018316">
    <property type="entry name" value="Tubulin/FtsZ_2-layer-sand-dom"/>
</dbReference>
<dbReference type="InterPro" id="IPR036525">
    <property type="entry name" value="Tubulin/FtsZ_GTPase_sf"/>
</dbReference>
<dbReference type="InterPro" id="IPR023123">
    <property type="entry name" value="Tubulin_C"/>
</dbReference>
<dbReference type="InterPro" id="IPR017975">
    <property type="entry name" value="Tubulin_CS"/>
</dbReference>
<dbReference type="InterPro" id="IPR003008">
    <property type="entry name" value="Tubulin_FtsZ_GTPase"/>
</dbReference>
<dbReference type="PANTHER" id="PTHR11588">
    <property type="entry name" value="TUBULIN"/>
    <property type="match status" value="1"/>
</dbReference>
<dbReference type="Pfam" id="PF00091">
    <property type="entry name" value="Tubulin"/>
    <property type="match status" value="1"/>
</dbReference>
<dbReference type="Pfam" id="PF03953">
    <property type="entry name" value="Tubulin_C"/>
    <property type="match status" value="1"/>
</dbReference>
<dbReference type="PRINTS" id="PR01163">
    <property type="entry name" value="BETATUBULIN"/>
</dbReference>
<dbReference type="PRINTS" id="PR01161">
    <property type="entry name" value="TUBULIN"/>
</dbReference>
<dbReference type="SMART" id="SM00864">
    <property type="entry name" value="Tubulin"/>
    <property type="match status" value="1"/>
</dbReference>
<dbReference type="SMART" id="SM00865">
    <property type="entry name" value="Tubulin_C"/>
    <property type="match status" value="1"/>
</dbReference>
<dbReference type="SUPFAM" id="SSF55307">
    <property type="entry name" value="Tubulin C-terminal domain-like"/>
    <property type="match status" value="1"/>
</dbReference>
<dbReference type="SUPFAM" id="SSF52490">
    <property type="entry name" value="Tubulin nucleotide-binding domain-like"/>
    <property type="match status" value="1"/>
</dbReference>
<dbReference type="PROSITE" id="PS00227">
    <property type="entry name" value="TUBULIN"/>
    <property type="match status" value="1"/>
</dbReference>
<dbReference type="PROSITE" id="PS00228">
    <property type="entry name" value="TUBULIN_B_AUTOREG"/>
    <property type="match status" value="1"/>
</dbReference>
<name>TBB6_CHICK</name>
<feature type="chain" id="PRO_0000048268" description="Tubulin beta-6 chain">
    <location>
        <begin position="1"/>
        <end position="446"/>
    </location>
</feature>
<feature type="region of interest" description="Disordered" evidence="6">
    <location>
        <begin position="419"/>
        <end position="446"/>
    </location>
</feature>
<feature type="short sequence motif" description="MREI motif" evidence="2">
    <location>
        <begin position="1"/>
        <end position="4"/>
    </location>
</feature>
<feature type="compositionally biased region" description="Acidic residues" evidence="6">
    <location>
        <begin position="430"/>
        <end position="440"/>
    </location>
</feature>
<feature type="binding site" evidence="4">
    <location>
        <position position="11"/>
    </location>
    <ligand>
        <name>GTP</name>
        <dbReference type="ChEBI" id="CHEBI:37565"/>
    </ligand>
</feature>
<feature type="binding site" evidence="3">
    <location>
        <position position="69"/>
    </location>
    <ligand>
        <name>GTP</name>
        <dbReference type="ChEBI" id="CHEBI:37565"/>
    </ligand>
</feature>
<feature type="binding site" evidence="3">
    <location>
        <position position="69"/>
    </location>
    <ligand>
        <name>Mg(2+)</name>
        <dbReference type="ChEBI" id="CHEBI:18420"/>
    </ligand>
</feature>
<feature type="binding site" evidence="4">
    <location>
        <position position="138"/>
    </location>
    <ligand>
        <name>GTP</name>
        <dbReference type="ChEBI" id="CHEBI:37565"/>
    </ligand>
</feature>
<feature type="binding site" evidence="4">
    <location>
        <position position="142"/>
    </location>
    <ligand>
        <name>GTP</name>
        <dbReference type="ChEBI" id="CHEBI:37565"/>
    </ligand>
</feature>
<feature type="binding site" evidence="4">
    <location>
        <position position="143"/>
    </location>
    <ligand>
        <name>GTP</name>
        <dbReference type="ChEBI" id="CHEBI:37565"/>
    </ligand>
</feature>
<feature type="binding site" evidence="4">
    <location>
        <position position="144"/>
    </location>
    <ligand>
        <name>GTP</name>
        <dbReference type="ChEBI" id="CHEBI:37565"/>
    </ligand>
</feature>
<feature type="binding site" evidence="4">
    <location>
        <position position="204"/>
    </location>
    <ligand>
        <name>GTP</name>
        <dbReference type="ChEBI" id="CHEBI:37565"/>
    </ligand>
</feature>
<feature type="binding site" evidence="4">
    <location>
        <position position="226"/>
    </location>
    <ligand>
        <name>GTP</name>
        <dbReference type="ChEBI" id="CHEBI:37565"/>
    </ligand>
</feature>
<feature type="helix" evidence="8">
    <location>
        <begin position="328"/>
        <end position="331"/>
    </location>
</feature>
<organism>
    <name type="scientific">Gallus gallus</name>
    <name type="common">Chicken</name>
    <dbReference type="NCBI Taxonomy" id="9031"/>
    <lineage>
        <taxon>Eukaryota</taxon>
        <taxon>Metazoa</taxon>
        <taxon>Chordata</taxon>
        <taxon>Craniata</taxon>
        <taxon>Vertebrata</taxon>
        <taxon>Euteleostomi</taxon>
        <taxon>Archelosauria</taxon>
        <taxon>Archosauria</taxon>
        <taxon>Dinosauria</taxon>
        <taxon>Saurischia</taxon>
        <taxon>Theropoda</taxon>
        <taxon>Coelurosauria</taxon>
        <taxon>Aves</taxon>
        <taxon>Neognathae</taxon>
        <taxon>Galloanserae</taxon>
        <taxon>Galliformes</taxon>
        <taxon>Phasianidae</taxon>
        <taxon>Phasianinae</taxon>
        <taxon>Gallus</taxon>
    </lineage>
</organism>
<protein>
    <recommendedName>
        <fullName>Tubulin beta-6 chain</fullName>
    </recommendedName>
    <alternativeName>
        <fullName>Beta-tubulin class-VI</fullName>
    </alternativeName>
</protein>
<keyword id="KW-0002">3D-structure</keyword>
<keyword id="KW-0963">Cytoplasm</keyword>
<keyword id="KW-0206">Cytoskeleton</keyword>
<keyword id="KW-0342">GTP-binding</keyword>
<keyword id="KW-0460">Magnesium</keyword>
<keyword id="KW-0479">Metal-binding</keyword>
<keyword id="KW-0493">Microtubule</keyword>
<keyword id="KW-0547">Nucleotide-binding</keyword>
<keyword id="KW-1185">Reference proteome</keyword>
<accession>P09207</accession>
<evidence type="ECO:0000250" key="1">
    <source>
        <dbReference type="UniProtKB" id="A2AQ07"/>
    </source>
</evidence>
<evidence type="ECO:0000250" key="2">
    <source>
        <dbReference type="UniProtKB" id="P07437"/>
    </source>
</evidence>
<evidence type="ECO:0000250" key="3">
    <source>
        <dbReference type="UniProtKB" id="P68363"/>
    </source>
</evidence>
<evidence type="ECO:0000250" key="4">
    <source>
        <dbReference type="UniProtKB" id="Q13509"/>
    </source>
</evidence>
<evidence type="ECO:0000250" key="5">
    <source>
        <dbReference type="UniProtKB" id="Q71U36"/>
    </source>
</evidence>
<evidence type="ECO:0000256" key="6">
    <source>
        <dbReference type="SAM" id="MobiDB-lite"/>
    </source>
</evidence>
<evidence type="ECO:0000305" key="7"/>
<evidence type="ECO:0007829" key="8">
    <source>
        <dbReference type="PDB" id="3BEW"/>
    </source>
</evidence>
<proteinExistence type="evidence at protein level"/>
<reference key="1">
    <citation type="journal article" date="1987" name="J. Biol. Chem.">
        <title>The sequence and expression of the divergent beta-tubulin in chicken erythrocytes.</title>
        <authorList>
            <person name="Murphy D.B."/>
            <person name="Wallis K.T."/>
            <person name="Machlin P.S."/>
            <person name="Ratrie H. III"/>
            <person name="Cleveland D.W."/>
        </authorList>
    </citation>
    <scope>NUCLEOTIDE SEQUENCE [MRNA]</scope>
</reference>
<comment type="function">
    <text>Tubulin is the major constituent of microtubules, a cylinder consisting of laterally associated linear protofilaments composed of alpha- and beta-tubulin heterodimers. Microtubules grow by the addition of GTP-tubulin dimers to the microtubule end, where a stabilizing cap forms. Below the cap, tubulin dimers are in GDP-bound state, owing to GTPase activity of alpha-tubulin.</text>
</comment>
<comment type="cofactor">
    <cofactor evidence="3">
        <name>Mg(2+)</name>
        <dbReference type="ChEBI" id="CHEBI:18420"/>
    </cofactor>
</comment>
<comment type="subunit">
    <text>Dimer of alpha and beta chains. A typical microtubule is a hollow water-filled tube with an outer diameter of 25 nm and an inner diameter of 15 nM. Alpha-beta heterodimers associate head-to-tail to form protofilaments running lengthwise along the microtubule wall with the beta-tubulin subunit facing the microtubule plus end conferring a structural polarity. Microtubules usually have 13 protofilaments but different protofilament numbers can be found in some organisms and specialized cells.</text>
</comment>
<comment type="subcellular location">
    <subcellularLocation>
        <location>Cytoplasm</location>
        <location>Cytoskeleton</location>
    </subcellularLocation>
</comment>
<comment type="tissue specificity">
    <text>Highly expressed in bone marrow.</text>
</comment>
<comment type="domain">
    <text evidence="2">The MREI motif is common among all beta-tubulin isoforms and may be critical for tubulin autoregulation.</text>
</comment>
<comment type="PTM">
    <text evidence="1">Some glutamate residues at the C-terminus are polyglycylated, resulting in polyglycine chains on the gamma-carboxyl group. Glycylation is mainly limited to tubulin incorporated into axonemes (cilia and flagella) whereas glutamylation is prevalent in neuronal cells, centrioles, axonemes, and the mitotic spindle. Both modifications can coexist on the same protein on adjacent residues, and lowering polyglycylation levels increases polyglutamylation, and reciprocally. The precise function of polyglycylation is still unclear.</text>
</comment>
<comment type="PTM">
    <text evidence="1 5">Some glutamate residues at the C-terminus are polyglutamylated, resulting in polyglutamate chains on the gamma-carboxyl group (By similarity). Polyglutamylation plays a key role in microtubule severing by spastin (SPAST). SPAST preferentially recognizes and acts on microtubules decorated with short polyglutamate tails: severing activity by SPAST increases as the number of glutamates per tubulin rises from one to eight, but decreases beyond this glutamylation threshold (By similarity).</text>
</comment>
<comment type="similarity">
    <text evidence="7">Belongs to the tubulin family.</text>
</comment>